<proteinExistence type="evidence at protein level"/>
<reference key="1">
    <citation type="journal article" date="1994" name="Curr. Genet.">
        <title>Organization and transcription of the mitochondrial ATP synthase genes in the yeast Yarrowia lipolytica.</title>
        <authorList>
            <person name="Matsuoka M."/>
            <person name="Matsubara M."/>
            <person name="Inoue J."/>
            <person name="Kakehi M."/>
            <person name="Imanaka T."/>
        </authorList>
    </citation>
    <scope>NUCLEOTIDE SEQUENCE [GENOMIC DNA]</scope>
    <source>
        <strain>ATCC 44601 / 281</strain>
    </source>
</reference>
<reference key="2">
    <citation type="journal article" date="2001" name="Comp. Funct. Genomics">
        <title>The complete mitochondrial genome of Yarrowia lipolytica.</title>
        <authorList>
            <person name="Kerscher S."/>
            <person name="Durstewitz G."/>
            <person name="Casaregola S."/>
            <person name="Gaillardin C."/>
            <person name="Brandt U."/>
        </authorList>
    </citation>
    <scope>NUCLEOTIDE SEQUENCE [LARGE SCALE GENOMIC DNA]</scope>
    <source>
        <strain>ATCC 20460 / W29 / CBS 7504 / IFP29</strain>
    </source>
</reference>
<reference key="3">
    <citation type="journal article" date="2015" name="Biochem. J.">
        <title>The purification and characterization of ATP synthase complexes from the mitochondria of four fungal species.</title>
        <authorList>
            <person name="Liu S."/>
            <person name="Charlesworth T.J."/>
            <person name="Bason J.V."/>
            <person name="Montgomery M.G."/>
            <person name="Harbour M.E."/>
            <person name="Fearnley I.M."/>
            <person name="Walker J.E."/>
        </authorList>
    </citation>
    <scope>IDENTIFICATION IN ATP SYNTHASE COMPLEX</scope>
    <scope>FUNCTION OF ATP SYNTHASE COMPLEX</scope>
    <scope>SUBUNIT</scope>
    <scope>MASS SPECTROMETRY</scope>
    <scope>IDENTIFICATION BY MASS SPECTROMETRY</scope>
    <source>
        <strain evidence="5">CLIB 122 / E 150</strain>
    </source>
</reference>
<reference key="4">
    <citation type="journal article" date="2016" name="Mol. Cell">
        <title>Structure of a Complete ATP Synthase Dimer Reveals the Molecular Basis of Inner Mitochondrial Membrane Morphology.</title>
        <authorList>
            <person name="Hahn A."/>
            <person name="Parey K."/>
            <person name="Bublitz M."/>
            <person name="Mills D.J."/>
            <person name="Zickermann V."/>
            <person name="Vonck J."/>
            <person name="Kuehlbrandt W."/>
            <person name="Meier T."/>
        </authorList>
    </citation>
    <scope>STRUCTURE BY ELECTRON MICROSCOPY (7.7 ANGSTROMS) OF DIMERIC ATP SYNTHASE COMPLEX</scope>
    <scope>FUNCTION</scope>
    <scope>SUBUNIT</scope>
    <scope>SUBCELLULAR LOCATION</scope>
    <scope>MEMBRANE TOPOLOGY</scope>
    <scope>IDENTIFICATION BY MASS SPECTROMETRY</scope>
</reference>
<protein>
    <recommendedName>
        <fullName evidence="1">ATP synthase subunit a</fullName>
    </recommendedName>
    <alternativeName>
        <fullName evidence="1">F-ATPase protein 6</fullName>
    </alternativeName>
</protein>
<feature type="propeptide" id="PRO_0000002624" description="Removed in mature form" evidence="3">
    <location>
        <begin position="1"/>
        <end position="6"/>
    </location>
</feature>
<feature type="chain" id="PRO_0000002625" description="ATP synthase subunit a" evidence="6">
    <location>
        <begin position="7"/>
        <end position="255"/>
    </location>
</feature>
<feature type="transmembrane region" description="Helical; Name=aH1" evidence="2">
    <location>
        <begin position="32"/>
        <end position="52"/>
    </location>
</feature>
<feature type="transmembrane region" description="Helical; Name=aH3" evidence="2">
    <location>
        <begin position="91"/>
        <end position="111"/>
    </location>
</feature>
<feature type="transmembrane region" description="Helical; Name=aH4" evidence="2">
    <location>
        <begin position="121"/>
        <end position="141"/>
    </location>
</feature>
<feature type="transmembrane region" description="Helical; Name=aH5" evidence="7">
    <location>
        <begin position="159"/>
        <end position="200"/>
    </location>
</feature>
<feature type="transmembrane region" description="Helical; Name=aH6" evidence="7">
    <location>
        <begin position="219"/>
        <end position="251"/>
    </location>
</feature>
<keyword id="KW-0066">ATP synthesis</keyword>
<keyword id="KW-0138">CF(0)</keyword>
<keyword id="KW-0375">Hydrogen ion transport</keyword>
<keyword id="KW-0406">Ion transport</keyword>
<keyword id="KW-0472">Membrane</keyword>
<keyword id="KW-0496">Mitochondrion</keyword>
<keyword id="KW-0999">Mitochondrion inner membrane</keyword>
<keyword id="KW-1185">Reference proteome</keyword>
<keyword id="KW-0812">Transmembrane</keyword>
<keyword id="KW-1133">Transmembrane helix</keyword>
<keyword id="KW-0813">Transport</keyword>
<organism>
    <name type="scientific">Yarrowia lipolytica (strain CLIB 122 / E 150)</name>
    <name type="common">Yeast</name>
    <name type="synonym">Candida lipolytica</name>
    <dbReference type="NCBI Taxonomy" id="284591"/>
    <lineage>
        <taxon>Eukaryota</taxon>
        <taxon>Fungi</taxon>
        <taxon>Dikarya</taxon>
        <taxon>Ascomycota</taxon>
        <taxon>Saccharomycotina</taxon>
        <taxon>Dipodascomycetes</taxon>
        <taxon>Dipodascales</taxon>
        <taxon>Dipodascales incertae sedis</taxon>
        <taxon>Yarrowia</taxon>
    </lineage>
</organism>
<name>ATP6_YARLI</name>
<gene>
    <name evidence="1" type="primary">ATP6</name>
</gene>
<accession>Q36258</accession>
<accession>Q9B6D9</accession>
<evidence type="ECO:0000250" key="1">
    <source>
        <dbReference type="UniProtKB" id="P00854"/>
    </source>
</evidence>
<evidence type="ECO:0000255" key="2"/>
<evidence type="ECO:0000269" key="3">
    <source>
    </source>
</evidence>
<evidence type="ECO:0000269" key="4">
    <source>
    </source>
</evidence>
<evidence type="ECO:0000303" key="5">
    <source>
    </source>
</evidence>
<evidence type="ECO:0000305" key="6"/>
<evidence type="ECO:0000305" key="7">
    <source>
    </source>
</evidence>
<dbReference type="EMBL" id="L15359">
    <property type="protein sequence ID" value="AAA78261.1"/>
    <property type="status" value="ALT_SEQ"/>
    <property type="molecule type" value="Genomic_DNA"/>
</dbReference>
<dbReference type="EMBL" id="AJ307410">
    <property type="protein sequence ID" value="CAC28100.1"/>
    <property type="molecule type" value="Genomic_DNA"/>
</dbReference>
<dbReference type="PIR" id="S51502">
    <property type="entry name" value="S51502"/>
</dbReference>
<dbReference type="RefSeq" id="NP_075433.2">
    <property type="nucleotide sequence ID" value="NC_002659.1"/>
</dbReference>
<dbReference type="SMR" id="Q36258"/>
<dbReference type="FunCoup" id="Q36258">
    <property type="interactions" value="256"/>
</dbReference>
<dbReference type="STRING" id="284591.Q36258"/>
<dbReference type="GeneID" id="802623"/>
<dbReference type="KEGG" id="yli:802623"/>
<dbReference type="InParanoid" id="Q36258"/>
<dbReference type="Proteomes" id="UP000001300">
    <property type="component" value="Mitochondrion"/>
</dbReference>
<dbReference type="GO" id="GO:0005743">
    <property type="term" value="C:mitochondrial inner membrane"/>
    <property type="evidence" value="ECO:0007669"/>
    <property type="project" value="UniProtKB-SubCell"/>
</dbReference>
<dbReference type="GO" id="GO:0045259">
    <property type="term" value="C:proton-transporting ATP synthase complex"/>
    <property type="evidence" value="ECO:0000318"/>
    <property type="project" value="GO_Central"/>
</dbReference>
<dbReference type="GO" id="GO:0015078">
    <property type="term" value="F:proton transmembrane transporter activity"/>
    <property type="evidence" value="ECO:0007669"/>
    <property type="project" value="InterPro"/>
</dbReference>
<dbReference type="GO" id="GO:0015986">
    <property type="term" value="P:proton motive force-driven ATP synthesis"/>
    <property type="evidence" value="ECO:0000318"/>
    <property type="project" value="GO_Central"/>
</dbReference>
<dbReference type="CDD" id="cd00310">
    <property type="entry name" value="ATP-synt_Fo_a_6"/>
    <property type="match status" value="1"/>
</dbReference>
<dbReference type="FunFam" id="1.20.120.220:FF:000003">
    <property type="entry name" value="ATP synthase subunit a"/>
    <property type="match status" value="1"/>
</dbReference>
<dbReference type="Gene3D" id="1.20.120.220">
    <property type="entry name" value="ATP synthase, F0 complex, subunit A"/>
    <property type="match status" value="1"/>
</dbReference>
<dbReference type="HAMAP" id="MF_01393">
    <property type="entry name" value="ATP_synth_a_bact"/>
    <property type="match status" value="1"/>
</dbReference>
<dbReference type="InterPro" id="IPR000568">
    <property type="entry name" value="ATP_synth_F0_asu"/>
</dbReference>
<dbReference type="InterPro" id="IPR023011">
    <property type="entry name" value="ATP_synth_F0_asu_AS"/>
</dbReference>
<dbReference type="InterPro" id="IPR045083">
    <property type="entry name" value="ATP_synth_F0_asu_bact/mt"/>
</dbReference>
<dbReference type="InterPro" id="IPR035908">
    <property type="entry name" value="F0_ATP_A_sf"/>
</dbReference>
<dbReference type="NCBIfam" id="TIGR01131">
    <property type="entry name" value="ATP_synt_6_or_A"/>
    <property type="match status" value="1"/>
</dbReference>
<dbReference type="PANTHER" id="PTHR11410">
    <property type="entry name" value="ATP SYNTHASE SUBUNIT A"/>
    <property type="match status" value="1"/>
</dbReference>
<dbReference type="PANTHER" id="PTHR11410:SF0">
    <property type="entry name" value="ATP SYNTHASE SUBUNIT A"/>
    <property type="match status" value="1"/>
</dbReference>
<dbReference type="Pfam" id="PF00119">
    <property type="entry name" value="ATP-synt_A"/>
    <property type="match status" value="1"/>
</dbReference>
<dbReference type="PRINTS" id="PR00123">
    <property type="entry name" value="ATPASEA"/>
</dbReference>
<dbReference type="SUPFAM" id="SSF81336">
    <property type="entry name" value="F1F0 ATP synthase subunit A"/>
    <property type="match status" value="1"/>
</dbReference>
<dbReference type="PROSITE" id="PS00449">
    <property type="entry name" value="ATPASE_A"/>
    <property type="match status" value="1"/>
</dbReference>
<sequence length="255" mass="27808">MNFIINSPLEQFTTRVYFGLSSGLINLDTITLTSFSIYSIAVVALILGFSILNDNNTNILPTRWSLAFESLYFTVEKMVSEQIGGLEGRLLFPFMFSLFMYILIANVVSLVPYSYAINAQLIWTIGLSVAIWIGCTLTGLANHGAKFFGLFLPSGTNLPLVPVLVIIELLSYIARALSLGLRLGSNILAGHLLLVILAGLILNFISISIFTFALGILPLSILLGIVALESAIAFIQAIVFTILTCSYIKDAIHLH</sequence>
<geneLocation type="mitochondrion"/>
<comment type="function">
    <text evidence="3 4">Mitochondrial membrane ATP synthase (F(1)F(0) ATP synthase or Complex V) produces ATP from ADP in the presence of a proton gradient across the membrane which is generated by electron transport complexes of the respiratory chain (PubMed:25759169). F-type ATP synthases consist of two structural domains, F(1) - containing the extramembraneous catalytic core, and F(0) - containing the membrane proton channel, linked together by a central stalk and a peripheral stalk (PubMed:27373333). During catalysis, ATP synthesis in the catalytic domain of F(1) is coupled via a rotary mechanism of the central stalk subunits to proton translocation (PubMed:27373333). Key component of the proton channel; it may play a direct role in the translocation of protons across the membrane (PubMed:27373333).</text>
</comment>
<comment type="subunit">
    <text evidence="3 4">F-type ATP synthases have 2 components, the catalytic core F(1) and the membrane-embedded component F(0), linked together by a central stalk and a peripheral stalk (PubMed:27373333). The central stalk, also called rotor shaft, is often seen as part of F(1) (PubMed:27373333). The peripheral stalk is seen as part of F(0) (PubMed:27373333). F(0) contains the membrane channel next to the rotor (PubMed:27373333). F-type ATP synthases form dimers but each monomer functions independently in ATP generation (PubMed:27373333). The dimer consists of 17 different polypeptides: ATP1 (subunit alpha, 3 molecules per monomer, part of F(1)), ATP2 (subunit beta, 3 copies per monomer, part of F(1)), ATP3 (subunit gamma, part of the central stalk), ATP4 (subunit b, part of the peripheral stalk), ATP5/OSCP (subunit 5/OSCP, part of the peripheral stalk), ATP6 (subunit a, part of the peripheral stalk), ATP7 (subunit d, part of the peripheral stalk), ATP8 (subunit 8, part of the peripheral stalk), OLI1 (subunit c, part of the rotor, 10 molecules per monomer), ATP14 (subunit h, part of the peripheral stalk), ATP15 (subunit epsilon, part of the central stalk), ATP16 (subunit delta, part of the central stalk), ATP17 (subunit f, part of the peripheral stalk), ATP18 (subunit i/j, part of the peripheral stalk), ATP19 (subunit k, dimer-specific, at interface between monomers), ATP20 (subunit g, at interface between monomers), TIM11 (subunit e, at interface between monomers) (PubMed:25759169, PubMed:27373333).</text>
</comment>
<comment type="subcellular location">
    <subcellularLocation>
        <location evidence="7">Mitochondrion inner membrane</location>
        <topology evidence="7">Multi-pass membrane protein</topology>
    </subcellularLocation>
    <text evidence="7">The F-type ATP synthase complex is anchored in the mitochondrial inner membrane via the F(0) domain with the F(1) domain and the peripheral stalk extending into the mitochondrial matrix.</text>
</comment>
<comment type="mass spectrometry" mass="27074.0" method="MALDI" evidence="3"/>
<comment type="similarity">
    <text evidence="6">Belongs to the ATPase A chain family.</text>
</comment>